<proteinExistence type="inferred from homology"/>
<organism>
    <name type="scientific">Dictyostelium discoideum</name>
    <name type="common">Social amoeba</name>
    <dbReference type="NCBI Taxonomy" id="44689"/>
    <lineage>
        <taxon>Eukaryota</taxon>
        <taxon>Amoebozoa</taxon>
        <taxon>Evosea</taxon>
        <taxon>Eumycetozoa</taxon>
        <taxon>Dictyostelia</taxon>
        <taxon>Dictyosteliales</taxon>
        <taxon>Dictyosteliaceae</taxon>
        <taxon>Dictyostelium</taxon>
    </lineage>
</organism>
<protein>
    <recommendedName>
        <fullName>Vacuolar protein sorting-associated protein 11 homolog</fullName>
    </recommendedName>
</protein>
<gene>
    <name type="primary">vps11</name>
    <name type="synonym">pep5</name>
    <name type="ORF">DDB_G0278141</name>
</gene>
<sequence>MNNWKRFTFFDIETVKQVEKEDGSSLQKLSITCTTSGRGSLIIGDAEGFINFVDREFGISSFQAYQQSVSLIYQLKERNFLSSVGHDDIGGAAILKIWNLDKTDKNEQPICVRSIKLEKSVTVTCFTLLEDLSQIIVGLANGEIIIIRADIFRDKVIKQKIIKVPNDSPITGLGFFPTKSQQSASAGAVLFVVTTTHVITYHTAHKDQETIIDDEGGDIGSFLMSDDGSPIIARSDAIYFYNVDGRGPCFGFTGVKTKVLWFRSYLVVIGYDTNNTNALFPGAVVGGQNSIGGLGSQTGSIGSPSVMVQNTKNNVLNIYDLKNKYIGFTEKFDTVSHICSEWGSIFIFGADGKVFQLEEKDTQTKLETLFKKHSYQVAIDLAKSQHYDNSAIADVYREYGDRLYAKGDYDGAITQYLCTIGQLEPSYVIRKFLDAQRIHNLTSYIQALHEKNLATANHTTLLLNCYTKLKDVKKLDHFIMTDNGTFDVETAIKVCRQGGYFDRALFLASKHSRHDWYLKILLEDLNEYRKALDYIQTLDWEEADKNLKKYGKQLVSEIPEETTGVLMKLCTNYQPVQAFDSLTALNLNGLTISNQTTTTTTVTNVTNNNNQNNNSNNNNQNNNNNNNNNIGFKQKSAPEEFIHIFVSQADWLVKFLEYMVQQGNNESSLIYNTLLELYLRDDVNQTDDERIKRKAKAYEFLTNPKSKFDQDHALILVQVHNWKEGVLYLYEKLELFNEIIEYHMENNDYDGLIKACKRYGVKDPNLWVRALSFFSTNKQDCQDEIIEVLTNIDKENLIPPLLVIQILSQNKNTTLAVIKDYISRRLSQETQQIDKDYTQIRQYADETEKMRHEINELRTNSKIFQQTKCIACLLALDLPSVHFLCQHSFHQRCLGENERECPSCAGANKRIQEIKRSQADSANQHDQFFKLLRSSPDGFTTVSEYFGRGILN</sequence>
<name>VPS11_DICDI</name>
<feature type="chain" id="PRO_0000350872" description="Vacuolar protein sorting-associated protein 11 homolog">
    <location>
        <begin position="1"/>
        <end position="952"/>
    </location>
</feature>
<feature type="repeat" description="CHCR 1">
    <location>
        <begin position="416"/>
        <end position="563"/>
    </location>
</feature>
<feature type="repeat" description="CHCR 2">
    <location>
        <begin position="629"/>
        <end position="783"/>
    </location>
</feature>
<feature type="zinc finger region" description="RING-type; atypical" evidence="3">
    <location>
        <begin position="869"/>
        <end position="905"/>
    </location>
</feature>
<feature type="region of interest" description="Disordered" evidence="4">
    <location>
        <begin position="608"/>
        <end position="632"/>
    </location>
</feature>
<feature type="coiled-coil region" evidence="2">
    <location>
        <begin position="837"/>
        <end position="868"/>
    </location>
</feature>
<feature type="compositionally biased region" description="Low complexity" evidence="4">
    <location>
        <begin position="608"/>
        <end position="629"/>
    </location>
</feature>
<keyword id="KW-0175">Coiled coil</keyword>
<keyword id="KW-0472">Membrane</keyword>
<keyword id="KW-0479">Metal-binding</keyword>
<keyword id="KW-0653">Protein transport</keyword>
<keyword id="KW-1185">Reference proteome</keyword>
<keyword id="KW-0677">Repeat</keyword>
<keyword id="KW-0813">Transport</keyword>
<keyword id="KW-0926">Vacuole</keyword>
<keyword id="KW-0862">Zinc</keyword>
<keyword id="KW-0863">Zinc-finger</keyword>
<dbReference type="EMBL" id="AAFI02000023">
    <property type="protein sequence ID" value="EAL68243.1"/>
    <property type="molecule type" value="Genomic_DNA"/>
</dbReference>
<dbReference type="RefSeq" id="XP_642158.1">
    <property type="nucleotide sequence ID" value="XM_637066.1"/>
</dbReference>
<dbReference type="SMR" id="Q54YP4"/>
<dbReference type="FunCoup" id="Q54YP4">
    <property type="interactions" value="501"/>
</dbReference>
<dbReference type="STRING" id="44689.Q54YP4"/>
<dbReference type="PaxDb" id="44689-DDB0234135"/>
<dbReference type="EnsemblProtists" id="EAL68243">
    <property type="protein sequence ID" value="EAL68243"/>
    <property type="gene ID" value="DDB_G0278141"/>
</dbReference>
<dbReference type="GeneID" id="8621365"/>
<dbReference type="KEGG" id="ddi:DDB_G0278141"/>
<dbReference type="dictyBase" id="DDB_G0278141">
    <property type="gene designation" value="vps11"/>
</dbReference>
<dbReference type="VEuPathDB" id="AmoebaDB:DDB_G0278141"/>
<dbReference type="eggNOG" id="KOG2114">
    <property type="taxonomic scope" value="Eukaryota"/>
</dbReference>
<dbReference type="HOGENOM" id="CLU_001287_0_1_1"/>
<dbReference type="InParanoid" id="Q54YP4"/>
<dbReference type="OMA" id="ENENECP"/>
<dbReference type="PhylomeDB" id="Q54YP4"/>
<dbReference type="PRO" id="PR:Q54YP4"/>
<dbReference type="Proteomes" id="UP000002195">
    <property type="component" value="Chromosome 3"/>
</dbReference>
<dbReference type="GO" id="GO:0005768">
    <property type="term" value="C:endosome"/>
    <property type="evidence" value="ECO:0000318"/>
    <property type="project" value="GO_Central"/>
</dbReference>
<dbReference type="GO" id="GO:0030897">
    <property type="term" value="C:HOPS complex"/>
    <property type="evidence" value="ECO:0000250"/>
    <property type="project" value="dictyBase"/>
</dbReference>
<dbReference type="GO" id="GO:0005774">
    <property type="term" value="C:vacuolar membrane"/>
    <property type="evidence" value="ECO:0007669"/>
    <property type="project" value="UniProtKB-SubCell"/>
</dbReference>
<dbReference type="GO" id="GO:0030674">
    <property type="term" value="F:protein-macromolecule adaptor activity"/>
    <property type="evidence" value="ECO:0000318"/>
    <property type="project" value="GO_Central"/>
</dbReference>
<dbReference type="GO" id="GO:0008270">
    <property type="term" value="F:zinc ion binding"/>
    <property type="evidence" value="ECO:0007669"/>
    <property type="project" value="UniProtKB-KW"/>
</dbReference>
<dbReference type="GO" id="GO:0007032">
    <property type="term" value="P:endosome organization"/>
    <property type="evidence" value="ECO:0000318"/>
    <property type="project" value="GO_Central"/>
</dbReference>
<dbReference type="GO" id="GO:0006886">
    <property type="term" value="P:intracellular protein transport"/>
    <property type="evidence" value="ECO:0007669"/>
    <property type="project" value="InterPro"/>
</dbReference>
<dbReference type="GO" id="GO:0048284">
    <property type="term" value="P:organelle fusion"/>
    <property type="evidence" value="ECO:0000318"/>
    <property type="project" value="GO_Central"/>
</dbReference>
<dbReference type="GO" id="GO:0042144">
    <property type="term" value="P:vacuole fusion, non-autophagic"/>
    <property type="evidence" value="ECO:0000250"/>
    <property type="project" value="dictyBase"/>
</dbReference>
<dbReference type="GO" id="GO:0007033">
    <property type="term" value="P:vacuole organization"/>
    <property type="evidence" value="ECO:0000318"/>
    <property type="project" value="GO_Central"/>
</dbReference>
<dbReference type="GO" id="GO:0006904">
    <property type="term" value="P:vesicle docking involved in exocytosis"/>
    <property type="evidence" value="ECO:0000318"/>
    <property type="project" value="GO_Central"/>
</dbReference>
<dbReference type="GO" id="GO:0016192">
    <property type="term" value="P:vesicle-mediated transport"/>
    <property type="evidence" value="ECO:0000250"/>
    <property type="project" value="dictyBase"/>
</dbReference>
<dbReference type="CDD" id="cd16688">
    <property type="entry name" value="RING-H2_Vps11"/>
    <property type="match status" value="1"/>
</dbReference>
<dbReference type="Gene3D" id="1.25.40.10">
    <property type="entry name" value="Tetratricopeptide repeat domain"/>
    <property type="match status" value="1"/>
</dbReference>
<dbReference type="Gene3D" id="3.30.40.10">
    <property type="entry name" value="Zinc/RING finger domain, C3HC4 (zinc finger)"/>
    <property type="match status" value="1"/>
</dbReference>
<dbReference type="InterPro" id="IPR016024">
    <property type="entry name" value="ARM-type_fold"/>
</dbReference>
<dbReference type="InterPro" id="IPR000547">
    <property type="entry name" value="Clathrin_H-chain/VPS_repeat"/>
</dbReference>
<dbReference type="InterPro" id="IPR011990">
    <property type="entry name" value="TPR-like_helical_dom_sf"/>
</dbReference>
<dbReference type="InterPro" id="IPR016528">
    <property type="entry name" value="VPS11"/>
</dbReference>
<dbReference type="InterPro" id="IPR024763">
    <property type="entry name" value="VPS11_C"/>
</dbReference>
<dbReference type="InterPro" id="IPR036322">
    <property type="entry name" value="WD40_repeat_dom_sf"/>
</dbReference>
<dbReference type="InterPro" id="IPR001841">
    <property type="entry name" value="Znf_RING"/>
</dbReference>
<dbReference type="InterPro" id="IPR013083">
    <property type="entry name" value="Znf_RING/FYVE/PHD"/>
</dbReference>
<dbReference type="PANTHER" id="PTHR23323">
    <property type="entry name" value="VACUOLAR PROTEIN SORTING-ASSOCIATED PROTEIN"/>
    <property type="match status" value="1"/>
</dbReference>
<dbReference type="PANTHER" id="PTHR23323:SF24">
    <property type="entry name" value="VACUOLAR PROTEIN SORTING-ASSOCIATED PROTEIN 11 HOMOLOG"/>
    <property type="match status" value="1"/>
</dbReference>
<dbReference type="Pfam" id="PF23341">
    <property type="entry name" value="PEP5_VPS11_N"/>
    <property type="match status" value="1"/>
</dbReference>
<dbReference type="Pfam" id="PF23356">
    <property type="entry name" value="TPR_PEP5_VPS11"/>
    <property type="match status" value="2"/>
</dbReference>
<dbReference type="Pfam" id="PF12451">
    <property type="entry name" value="VPS11_C"/>
    <property type="match status" value="1"/>
</dbReference>
<dbReference type="PIRSF" id="PIRSF007860">
    <property type="entry name" value="VPS11"/>
    <property type="match status" value="1"/>
</dbReference>
<dbReference type="SUPFAM" id="SSF48371">
    <property type="entry name" value="ARM repeat"/>
    <property type="match status" value="1"/>
</dbReference>
<dbReference type="SUPFAM" id="SSF57850">
    <property type="entry name" value="RING/U-box"/>
    <property type="match status" value="1"/>
</dbReference>
<dbReference type="SUPFAM" id="SSF50978">
    <property type="entry name" value="WD40 repeat-like"/>
    <property type="match status" value="1"/>
</dbReference>
<dbReference type="PROSITE" id="PS50236">
    <property type="entry name" value="CHCR"/>
    <property type="match status" value="2"/>
</dbReference>
<dbReference type="PROSITE" id="PS50089">
    <property type="entry name" value="ZF_RING_2"/>
    <property type="match status" value="1"/>
</dbReference>
<evidence type="ECO:0000250" key="1"/>
<evidence type="ECO:0000255" key="2"/>
<evidence type="ECO:0000255" key="3">
    <source>
        <dbReference type="PROSITE-ProRule" id="PRU00175"/>
    </source>
</evidence>
<evidence type="ECO:0000256" key="4">
    <source>
        <dbReference type="SAM" id="MobiDB-lite"/>
    </source>
</evidence>
<evidence type="ECO:0000305" key="5"/>
<comment type="function">
    <text evidence="1">May play a role in vesicle-mediated protein trafficking.</text>
</comment>
<comment type="subcellular location">
    <subcellularLocation>
        <location evidence="1">Vacuole membrane</location>
        <topology evidence="1">Peripheral membrane protein</topology>
        <orientation evidence="1">Cytoplasmic side</orientation>
    </subcellularLocation>
</comment>
<comment type="similarity">
    <text evidence="5">Belongs to the VPS11 family.</text>
</comment>
<reference key="1">
    <citation type="journal article" date="2005" name="Nature">
        <title>The genome of the social amoeba Dictyostelium discoideum.</title>
        <authorList>
            <person name="Eichinger L."/>
            <person name="Pachebat J.A."/>
            <person name="Gloeckner G."/>
            <person name="Rajandream M.A."/>
            <person name="Sucgang R."/>
            <person name="Berriman M."/>
            <person name="Song J."/>
            <person name="Olsen R."/>
            <person name="Szafranski K."/>
            <person name="Xu Q."/>
            <person name="Tunggal B."/>
            <person name="Kummerfeld S."/>
            <person name="Madera M."/>
            <person name="Konfortov B.A."/>
            <person name="Rivero F."/>
            <person name="Bankier A.T."/>
            <person name="Lehmann R."/>
            <person name="Hamlin N."/>
            <person name="Davies R."/>
            <person name="Gaudet P."/>
            <person name="Fey P."/>
            <person name="Pilcher K."/>
            <person name="Chen G."/>
            <person name="Saunders D."/>
            <person name="Sodergren E.J."/>
            <person name="Davis P."/>
            <person name="Kerhornou A."/>
            <person name="Nie X."/>
            <person name="Hall N."/>
            <person name="Anjard C."/>
            <person name="Hemphill L."/>
            <person name="Bason N."/>
            <person name="Farbrother P."/>
            <person name="Desany B."/>
            <person name="Just E."/>
            <person name="Morio T."/>
            <person name="Rost R."/>
            <person name="Churcher C.M."/>
            <person name="Cooper J."/>
            <person name="Haydock S."/>
            <person name="van Driessche N."/>
            <person name="Cronin A."/>
            <person name="Goodhead I."/>
            <person name="Muzny D.M."/>
            <person name="Mourier T."/>
            <person name="Pain A."/>
            <person name="Lu M."/>
            <person name="Harper D."/>
            <person name="Lindsay R."/>
            <person name="Hauser H."/>
            <person name="James K.D."/>
            <person name="Quiles M."/>
            <person name="Madan Babu M."/>
            <person name="Saito T."/>
            <person name="Buchrieser C."/>
            <person name="Wardroper A."/>
            <person name="Felder M."/>
            <person name="Thangavelu M."/>
            <person name="Johnson D."/>
            <person name="Knights A."/>
            <person name="Loulseged H."/>
            <person name="Mungall K.L."/>
            <person name="Oliver K."/>
            <person name="Price C."/>
            <person name="Quail M.A."/>
            <person name="Urushihara H."/>
            <person name="Hernandez J."/>
            <person name="Rabbinowitsch E."/>
            <person name="Steffen D."/>
            <person name="Sanders M."/>
            <person name="Ma J."/>
            <person name="Kohara Y."/>
            <person name="Sharp S."/>
            <person name="Simmonds M.N."/>
            <person name="Spiegler S."/>
            <person name="Tivey A."/>
            <person name="Sugano S."/>
            <person name="White B."/>
            <person name="Walker D."/>
            <person name="Woodward J.R."/>
            <person name="Winckler T."/>
            <person name="Tanaka Y."/>
            <person name="Shaulsky G."/>
            <person name="Schleicher M."/>
            <person name="Weinstock G.M."/>
            <person name="Rosenthal A."/>
            <person name="Cox E.C."/>
            <person name="Chisholm R.L."/>
            <person name="Gibbs R.A."/>
            <person name="Loomis W.F."/>
            <person name="Platzer M."/>
            <person name="Kay R.R."/>
            <person name="Williams J.G."/>
            <person name="Dear P.H."/>
            <person name="Noegel A.A."/>
            <person name="Barrell B.G."/>
            <person name="Kuspa A."/>
        </authorList>
    </citation>
    <scope>NUCLEOTIDE SEQUENCE [LARGE SCALE GENOMIC DNA]</scope>
    <source>
        <strain>AX4</strain>
    </source>
</reference>
<accession>Q54YP4</accession>